<gene>
    <name type="primary">hbb2</name>
</gene>
<name>HBB2_GOBGI</name>
<comment type="function">
    <text>Involved in oxygen transport from gills to the various peripheral tissues.</text>
</comment>
<comment type="subunit">
    <text evidence="2">Hb 2 is a heterotetramer of two alpha-2 and two beta-2 chains.</text>
</comment>
<comment type="tissue specificity">
    <text evidence="3">Red blood cells.</text>
</comment>
<comment type="mass spectrometry"/>
<comment type="miscellaneous">
    <text>This fish has two hemoglobins: Hb1 (major) and Hb2 (about 15-20% of the total). They display the Root effect and the alkaline Bohr effect, which is enhanced by organophosphate and to a lesser extent by chloride.</text>
</comment>
<comment type="similarity">
    <text evidence="1 3">Belongs to the globin family.</text>
</comment>
<feature type="chain" id="PRO_0000052965" description="Hemoglobin subunit beta-2">
    <location>
        <begin position="1"/>
        <end position="146"/>
    </location>
</feature>
<feature type="domain" description="Globin" evidence="1">
    <location>
        <begin position="2"/>
        <end position="146"/>
    </location>
</feature>
<feature type="binding site" description="distal binding residue" evidence="1">
    <location>
        <position position="63"/>
    </location>
    <ligand>
        <name>heme b</name>
        <dbReference type="ChEBI" id="CHEBI:60344"/>
    </ligand>
    <ligandPart>
        <name>Fe</name>
        <dbReference type="ChEBI" id="CHEBI:18248"/>
    </ligandPart>
</feature>
<feature type="binding site" description="proximal binding residue" evidence="1">
    <location>
        <position position="92"/>
    </location>
    <ligand>
        <name>heme b</name>
        <dbReference type="ChEBI" id="CHEBI:60344"/>
    </ligand>
    <ligandPart>
        <name>Fe</name>
        <dbReference type="ChEBI" id="CHEBI:18248"/>
    </ligandPart>
</feature>
<proteinExistence type="evidence at protein level"/>
<dbReference type="SMR" id="P83614"/>
<dbReference type="GO" id="GO:0072562">
    <property type="term" value="C:blood microparticle"/>
    <property type="evidence" value="ECO:0007669"/>
    <property type="project" value="TreeGrafter"/>
</dbReference>
<dbReference type="GO" id="GO:0031838">
    <property type="term" value="C:haptoglobin-hemoglobin complex"/>
    <property type="evidence" value="ECO:0007669"/>
    <property type="project" value="TreeGrafter"/>
</dbReference>
<dbReference type="GO" id="GO:0005833">
    <property type="term" value="C:hemoglobin complex"/>
    <property type="evidence" value="ECO:0007669"/>
    <property type="project" value="InterPro"/>
</dbReference>
<dbReference type="GO" id="GO:0031720">
    <property type="term" value="F:haptoglobin binding"/>
    <property type="evidence" value="ECO:0007669"/>
    <property type="project" value="TreeGrafter"/>
</dbReference>
<dbReference type="GO" id="GO:0020037">
    <property type="term" value="F:heme binding"/>
    <property type="evidence" value="ECO:0007669"/>
    <property type="project" value="InterPro"/>
</dbReference>
<dbReference type="GO" id="GO:0046872">
    <property type="term" value="F:metal ion binding"/>
    <property type="evidence" value="ECO:0007669"/>
    <property type="project" value="UniProtKB-KW"/>
</dbReference>
<dbReference type="GO" id="GO:0043177">
    <property type="term" value="F:organic acid binding"/>
    <property type="evidence" value="ECO:0007669"/>
    <property type="project" value="TreeGrafter"/>
</dbReference>
<dbReference type="GO" id="GO:0019825">
    <property type="term" value="F:oxygen binding"/>
    <property type="evidence" value="ECO:0007669"/>
    <property type="project" value="InterPro"/>
</dbReference>
<dbReference type="GO" id="GO:0005344">
    <property type="term" value="F:oxygen carrier activity"/>
    <property type="evidence" value="ECO:0007669"/>
    <property type="project" value="UniProtKB-KW"/>
</dbReference>
<dbReference type="GO" id="GO:0004601">
    <property type="term" value="F:peroxidase activity"/>
    <property type="evidence" value="ECO:0007669"/>
    <property type="project" value="TreeGrafter"/>
</dbReference>
<dbReference type="GO" id="GO:0042744">
    <property type="term" value="P:hydrogen peroxide catabolic process"/>
    <property type="evidence" value="ECO:0007669"/>
    <property type="project" value="TreeGrafter"/>
</dbReference>
<dbReference type="CDD" id="cd08925">
    <property type="entry name" value="Hb-beta-like"/>
    <property type="match status" value="1"/>
</dbReference>
<dbReference type="FunFam" id="1.10.490.10:FF:000001">
    <property type="entry name" value="Hemoglobin subunit beta"/>
    <property type="match status" value="1"/>
</dbReference>
<dbReference type="Gene3D" id="1.10.490.10">
    <property type="entry name" value="Globins"/>
    <property type="match status" value="1"/>
</dbReference>
<dbReference type="InterPro" id="IPR000971">
    <property type="entry name" value="Globin"/>
</dbReference>
<dbReference type="InterPro" id="IPR009050">
    <property type="entry name" value="Globin-like_sf"/>
</dbReference>
<dbReference type="InterPro" id="IPR012292">
    <property type="entry name" value="Globin/Proto"/>
</dbReference>
<dbReference type="InterPro" id="IPR002337">
    <property type="entry name" value="Hemoglobin_b"/>
</dbReference>
<dbReference type="InterPro" id="IPR050056">
    <property type="entry name" value="Hemoglobin_oxygen_transport"/>
</dbReference>
<dbReference type="PANTHER" id="PTHR11442">
    <property type="entry name" value="HEMOGLOBIN FAMILY MEMBER"/>
    <property type="match status" value="1"/>
</dbReference>
<dbReference type="PANTHER" id="PTHR11442:SF7">
    <property type="entry name" value="HEMOGLOBIN SUBUNIT EPSILON"/>
    <property type="match status" value="1"/>
</dbReference>
<dbReference type="Pfam" id="PF00042">
    <property type="entry name" value="Globin"/>
    <property type="match status" value="1"/>
</dbReference>
<dbReference type="PRINTS" id="PR00814">
    <property type="entry name" value="BETAHAEM"/>
</dbReference>
<dbReference type="SUPFAM" id="SSF46458">
    <property type="entry name" value="Globin-like"/>
    <property type="match status" value="1"/>
</dbReference>
<dbReference type="PROSITE" id="PS01033">
    <property type="entry name" value="GLOBIN"/>
    <property type="match status" value="1"/>
</dbReference>
<evidence type="ECO:0000255" key="1">
    <source>
        <dbReference type="PROSITE-ProRule" id="PRU00238"/>
    </source>
</evidence>
<evidence type="ECO:0000269" key="2">
    <source>
    </source>
</evidence>
<evidence type="ECO:0000305" key="3"/>
<accession>P83614</accession>
<sequence>VEWTDFERATINDIFSKLEYEVVGPATLARCLVVYPWTQRYFGNFGNLYNAAAIAENPMVSKHGITILHGLDRAVKNMDDIKNTYAELSVLHSEKLHVDPDNFQLLADCLTIVVAARFGNTFTGEVQAAFQKFLSVVVSSLGRQYH</sequence>
<protein>
    <recommendedName>
        <fullName>Hemoglobin subunit beta-2</fullName>
    </recommendedName>
    <alternativeName>
        <fullName>Beta-2-globin</fullName>
    </alternativeName>
    <alternativeName>
        <fullName>Hemoglobin beta-2 chain</fullName>
    </alternativeName>
</protein>
<reference evidence="3" key="1">
    <citation type="journal article" date="2003" name="Eur. J. Biochem.">
        <title>Unique features of the hemoglobin system of the Antarctic fish Gobionotothen gibberifrons.</title>
        <authorList>
            <person name="Marinakis P."/>
            <person name="Tamburrini M."/>
            <person name="Carratore V."/>
            <person name="di Prisco G."/>
        </authorList>
    </citation>
    <scope>PROTEIN SEQUENCE</scope>
    <scope>SUBUNIT</scope>
    <scope>MASS SPECTROMETRY</scope>
    <source>
        <tissue evidence="2">Blood</tissue>
    </source>
</reference>
<organism evidence="3">
    <name type="scientific">Gobionotothen gibberifrons</name>
    <name type="common">Humped rockcod</name>
    <name type="synonym">Notothenia gibberifrons</name>
    <dbReference type="NCBI Taxonomy" id="36202"/>
    <lineage>
        <taxon>Eukaryota</taxon>
        <taxon>Metazoa</taxon>
        <taxon>Chordata</taxon>
        <taxon>Craniata</taxon>
        <taxon>Vertebrata</taxon>
        <taxon>Euteleostomi</taxon>
        <taxon>Actinopterygii</taxon>
        <taxon>Neopterygii</taxon>
        <taxon>Teleostei</taxon>
        <taxon>Neoteleostei</taxon>
        <taxon>Acanthomorphata</taxon>
        <taxon>Eupercaria</taxon>
        <taxon>Perciformes</taxon>
        <taxon>Notothenioidei</taxon>
        <taxon>Nototheniidae</taxon>
        <taxon>Gobionotothen</taxon>
    </lineage>
</organism>
<keyword id="KW-0903">Direct protein sequencing</keyword>
<keyword id="KW-0349">Heme</keyword>
<keyword id="KW-0408">Iron</keyword>
<keyword id="KW-0479">Metal-binding</keyword>
<keyword id="KW-0561">Oxygen transport</keyword>
<keyword id="KW-0813">Transport</keyword>